<evidence type="ECO:0000250" key="1">
    <source>
        <dbReference type="UniProtKB" id="Q4KLV1"/>
    </source>
</evidence>
<evidence type="ECO:0000269" key="2">
    <source>
    </source>
</evidence>
<evidence type="ECO:0000269" key="3">
    <source>
    </source>
</evidence>
<evidence type="ECO:0000269" key="4">
    <source>
    </source>
</evidence>
<evidence type="ECO:0000303" key="5">
    <source>
    </source>
</evidence>
<evidence type="ECO:0000305" key="6"/>
<evidence type="ECO:0000305" key="7">
    <source>
    </source>
</evidence>
<evidence type="ECO:0000312" key="8">
    <source>
        <dbReference type="HGNC" id="HGNC:17852"/>
    </source>
</evidence>
<evidence type="ECO:0007744" key="9">
    <source>
    </source>
</evidence>
<dbReference type="EC" id="2.7.8.2" evidence="2"/>
<dbReference type="EMBL" id="AF195623">
    <property type="protein sequence ID" value="AAF87947.1"/>
    <property type="molecule type" value="mRNA"/>
</dbReference>
<dbReference type="EMBL" id="AF195624">
    <property type="protein sequence ID" value="AAF87948.1"/>
    <property type="molecule type" value="mRNA"/>
</dbReference>
<dbReference type="EMBL" id="AK075211">
    <property type="protein sequence ID" value="BAG52084.1"/>
    <property type="molecule type" value="mRNA"/>
</dbReference>
<dbReference type="EMBL" id="CH471054">
    <property type="protein sequence ID" value="EAW97675.1"/>
    <property type="molecule type" value="Genomic_DNA"/>
</dbReference>
<dbReference type="EMBL" id="BC020819">
    <property type="protein sequence ID" value="AAH20819.1"/>
    <property type="molecule type" value="mRNA"/>
</dbReference>
<dbReference type="EMBL" id="BC050429">
    <property type="protein sequence ID" value="AAH50429.1"/>
    <property type="molecule type" value="mRNA"/>
</dbReference>
<dbReference type="EMBL" id="AF047431">
    <property type="protein sequence ID" value="AAD44019.1"/>
    <property type="status" value="ALT_FRAME"/>
    <property type="molecule type" value="mRNA"/>
</dbReference>
<dbReference type="EMBL" id="AF111803">
    <property type="protein sequence ID" value="AAL39005.1"/>
    <property type="status" value="ALT_INIT"/>
    <property type="molecule type" value="mRNA"/>
</dbReference>
<dbReference type="EMBL" id="AY280609">
    <property type="protein sequence ID" value="AAP34412.1"/>
    <property type="molecule type" value="mRNA"/>
</dbReference>
<dbReference type="EMBL" id="AY280610">
    <property type="protein sequence ID" value="AAP34413.1"/>
    <property type="molecule type" value="mRNA"/>
</dbReference>
<dbReference type="EMBL" id="AY294627">
    <property type="protein sequence ID" value="AAP37157.1"/>
    <property type="molecule type" value="mRNA"/>
</dbReference>
<dbReference type="EMBL" id="AY166717">
    <property type="protein sequence ID" value="AAN86122.1"/>
    <property type="molecule type" value="mRNA"/>
</dbReference>
<dbReference type="EMBL" id="AY166718">
    <property type="protein sequence ID" value="AAN86123.1"/>
    <property type="molecule type" value="mRNA"/>
</dbReference>
<dbReference type="CCDS" id="CCDS9086.1">
    <molecule id="Q8WUD6-1"/>
</dbReference>
<dbReference type="RefSeq" id="NP_064629.2">
    <molecule id="Q8WUD6-1"/>
    <property type="nucleotide sequence ID" value="NM_020244.3"/>
</dbReference>
<dbReference type="SMR" id="Q8WUD6"/>
<dbReference type="BioGRID" id="121309">
    <property type="interactions" value="73"/>
</dbReference>
<dbReference type="FunCoup" id="Q8WUD6">
    <property type="interactions" value="2857"/>
</dbReference>
<dbReference type="IntAct" id="Q8WUD6">
    <property type="interactions" value="61"/>
</dbReference>
<dbReference type="MINT" id="Q8WUD6"/>
<dbReference type="STRING" id="9606.ENSP00000229266"/>
<dbReference type="SwissLipids" id="SLP:000001750">
    <molecule id="Q8WUD6-1"/>
</dbReference>
<dbReference type="iPTMnet" id="Q8WUD6"/>
<dbReference type="PhosphoSitePlus" id="Q8WUD6"/>
<dbReference type="SwissPalm" id="Q8WUD6"/>
<dbReference type="BioMuta" id="CHPT1"/>
<dbReference type="DMDM" id="74730698"/>
<dbReference type="jPOST" id="Q8WUD6"/>
<dbReference type="MassIVE" id="Q8WUD6"/>
<dbReference type="PaxDb" id="9606-ENSP00000229266"/>
<dbReference type="PeptideAtlas" id="Q8WUD6"/>
<dbReference type="ProteomicsDB" id="74659">
    <molecule id="Q8WUD6-1"/>
</dbReference>
<dbReference type="ProteomicsDB" id="74660">
    <molecule id="Q8WUD6-2"/>
</dbReference>
<dbReference type="Pumba" id="Q8WUD6"/>
<dbReference type="Antibodypedia" id="55006">
    <property type="antibodies" value="93 antibodies from 20 providers"/>
</dbReference>
<dbReference type="DNASU" id="56994"/>
<dbReference type="Ensembl" id="ENST00000229266.8">
    <molecule id="Q8WUD6-1"/>
    <property type="protein sequence ID" value="ENSP00000229266.3"/>
    <property type="gene ID" value="ENSG00000111666.11"/>
</dbReference>
<dbReference type="Ensembl" id="ENST00000552351.5">
    <molecule id="Q8WUD6-2"/>
    <property type="protein sequence ID" value="ENSP00000447887.1"/>
    <property type="gene ID" value="ENSG00000111666.11"/>
</dbReference>
<dbReference type="GeneID" id="56994"/>
<dbReference type="KEGG" id="hsa:56994"/>
<dbReference type="MANE-Select" id="ENST00000229266.8">
    <property type="protein sequence ID" value="ENSP00000229266.3"/>
    <property type="RefSeq nucleotide sequence ID" value="NM_020244.3"/>
    <property type="RefSeq protein sequence ID" value="NP_064629.2"/>
</dbReference>
<dbReference type="UCSC" id="uc001tin.4">
    <molecule id="Q8WUD6-1"/>
    <property type="organism name" value="human"/>
</dbReference>
<dbReference type="AGR" id="HGNC:17852"/>
<dbReference type="CTD" id="56994"/>
<dbReference type="DisGeNET" id="56994"/>
<dbReference type="GeneCards" id="CHPT1"/>
<dbReference type="HGNC" id="HGNC:17852">
    <property type="gene designation" value="CHPT1"/>
</dbReference>
<dbReference type="HPA" id="ENSG00000111666">
    <property type="expression patterns" value="Low tissue specificity"/>
</dbReference>
<dbReference type="MIM" id="616747">
    <property type="type" value="gene"/>
</dbReference>
<dbReference type="neXtProt" id="NX_Q8WUD6"/>
<dbReference type="OpenTargets" id="ENSG00000111666"/>
<dbReference type="PharmGKB" id="PA26477"/>
<dbReference type="VEuPathDB" id="HostDB:ENSG00000111666"/>
<dbReference type="eggNOG" id="KOG2877">
    <property type="taxonomic scope" value="Eukaryota"/>
</dbReference>
<dbReference type="GeneTree" id="ENSGT00950000183117"/>
<dbReference type="HOGENOM" id="CLU_035066_1_0_1"/>
<dbReference type="InParanoid" id="Q8WUD6"/>
<dbReference type="OMA" id="VSHYLEY"/>
<dbReference type="OrthoDB" id="196717at2759"/>
<dbReference type="PAN-GO" id="Q8WUD6">
    <property type="GO annotations" value="3 GO annotations based on evolutionary models"/>
</dbReference>
<dbReference type="PhylomeDB" id="Q8WUD6"/>
<dbReference type="TreeFam" id="TF313270"/>
<dbReference type="BRENDA" id="2.7.8.2">
    <property type="organism ID" value="2681"/>
</dbReference>
<dbReference type="PathwayCommons" id="Q8WUD6"/>
<dbReference type="Reactome" id="R-HSA-1483191">
    <property type="pathway name" value="Synthesis of PC"/>
</dbReference>
<dbReference type="SignaLink" id="Q8WUD6"/>
<dbReference type="UniPathway" id="UPA00753">
    <property type="reaction ID" value="UER00740"/>
</dbReference>
<dbReference type="BioGRID-ORCS" id="56994">
    <property type="hits" value="14 hits in 1159 CRISPR screens"/>
</dbReference>
<dbReference type="ChiTaRS" id="CHPT1">
    <property type="organism name" value="human"/>
</dbReference>
<dbReference type="GenomeRNAi" id="56994"/>
<dbReference type="Pharos" id="Q8WUD6">
    <property type="development level" value="Tbio"/>
</dbReference>
<dbReference type="PRO" id="PR:Q8WUD6"/>
<dbReference type="Proteomes" id="UP000005640">
    <property type="component" value="Chromosome 12"/>
</dbReference>
<dbReference type="RNAct" id="Q8WUD6">
    <property type="molecule type" value="protein"/>
</dbReference>
<dbReference type="Bgee" id="ENSG00000111666">
    <property type="expression patterns" value="Expressed in jejunal mucosa and 205 other cell types or tissues"/>
</dbReference>
<dbReference type="ExpressionAtlas" id="Q8WUD6">
    <property type="expression patterns" value="baseline and differential"/>
</dbReference>
<dbReference type="GO" id="GO:0005789">
    <property type="term" value="C:endoplasmic reticulum membrane"/>
    <property type="evidence" value="ECO:0000318"/>
    <property type="project" value="GO_Central"/>
</dbReference>
<dbReference type="GO" id="GO:0005794">
    <property type="term" value="C:Golgi apparatus"/>
    <property type="evidence" value="ECO:0000318"/>
    <property type="project" value="GO_Central"/>
</dbReference>
<dbReference type="GO" id="GO:0000139">
    <property type="term" value="C:Golgi membrane"/>
    <property type="evidence" value="ECO:0000314"/>
    <property type="project" value="UniProt"/>
</dbReference>
<dbReference type="GO" id="GO:0043231">
    <property type="term" value="C:intracellular membrane-bounded organelle"/>
    <property type="evidence" value="ECO:0000303"/>
    <property type="project" value="UniProtKB"/>
</dbReference>
<dbReference type="GO" id="GO:0016020">
    <property type="term" value="C:membrane"/>
    <property type="evidence" value="ECO:0000303"/>
    <property type="project" value="UniProtKB"/>
</dbReference>
<dbReference type="GO" id="GO:0019992">
    <property type="term" value="F:diacylglycerol binding"/>
    <property type="evidence" value="ECO:0000303"/>
    <property type="project" value="UniProtKB"/>
</dbReference>
<dbReference type="GO" id="GO:0004142">
    <property type="term" value="F:diacylglycerol cholinephosphotransferase activity"/>
    <property type="evidence" value="ECO:0000314"/>
    <property type="project" value="UniProtKB"/>
</dbReference>
<dbReference type="GO" id="GO:0046872">
    <property type="term" value="F:metal ion binding"/>
    <property type="evidence" value="ECO:0007669"/>
    <property type="project" value="UniProtKB-KW"/>
</dbReference>
<dbReference type="GO" id="GO:0006657">
    <property type="term" value="P:CDP-choline pathway"/>
    <property type="evidence" value="ECO:0000303"/>
    <property type="project" value="UniProtKB"/>
</dbReference>
<dbReference type="GO" id="GO:0006629">
    <property type="term" value="P:lipid metabolic process"/>
    <property type="evidence" value="ECO:0000304"/>
    <property type="project" value="ProtInc"/>
</dbReference>
<dbReference type="GO" id="GO:0006656">
    <property type="term" value="P:phosphatidylcholine biosynthetic process"/>
    <property type="evidence" value="ECO:0000314"/>
    <property type="project" value="UniProtKB"/>
</dbReference>
<dbReference type="GO" id="GO:0006663">
    <property type="term" value="P:platelet activating factor biosynthetic process"/>
    <property type="evidence" value="ECO:0000314"/>
    <property type="project" value="UniProtKB"/>
</dbReference>
<dbReference type="GO" id="GO:0001558">
    <property type="term" value="P:regulation of cell growth"/>
    <property type="evidence" value="ECO:0000303"/>
    <property type="project" value="UniProtKB"/>
</dbReference>
<dbReference type="FunFam" id="1.20.120.1760:FF:000002">
    <property type="entry name" value="Choline/ethanolamine phosphotransferase 1"/>
    <property type="match status" value="1"/>
</dbReference>
<dbReference type="Gene3D" id="1.20.120.1760">
    <property type="match status" value="1"/>
</dbReference>
<dbReference type="InterPro" id="IPR000462">
    <property type="entry name" value="CDP-OH_P_trans"/>
</dbReference>
<dbReference type="InterPro" id="IPR043130">
    <property type="entry name" value="CDP-OH_PTrfase_TM_dom"/>
</dbReference>
<dbReference type="InterPro" id="IPR048254">
    <property type="entry name" value="CDP_ALCOHOL_P_TRANSF_CS"/>
</dbReference>
<dbReference type="InterPro" id="IPR014472">
    <property type="entry name" value="CHOPT"/>
</dbReference>
<dbReference type="PANTHER" id="PTHR10414:SF32">
    <property type="entry name" value="CHOLINEPHOSPHOTRANSFERASE 1"/>
    <property type="match status" value="1"/>
</dbReference>
<dbReference type="PANTHER" id="PTHR10414">
    <property type="entry name" value="ETHANOLAMINEPHOSPHOTRANSFERASE"/>
    <property type="match status" value="1"/>
</dbReference>
<dbReference type="Pfam" id="PF01066">
    <property type="entry name" value="CDP-OH_P_transf"/>
    <property type="match status" value="1"/>
</dbReference>
<dbReference type="PIRSF" id="PIRSF015665">
    <property type="entry name" value="CHOPT"/>
    <property type="match status" value="1"/>
</dbReference>
<dbReference type="PROSITE" id="PS00379">
    <property type="entry name" value="CDP_ALCOHOL_P_TRANSF"/>
    <property type="match status" value="1"/>
</dbReference>
<sequence length="406" mass="45097">MAAGAGAGSAPRWLRALSEPLSAAQLRRLEEHRYSAAGVSLLEPPLQLYWTWLLQWIPLWMAPNSITLLGLAVNVVTTLVLISYCPTATEEAPYWTYLLCALGLFIYQSLDAIDGKQARRTNSCSPLGELFDHGCDSLSTVFMAVGASIAARLGTYPDWFFFCSFIGMFVFYCAHWQTYVSGMLRFGKVDVTEIQIALVIVFVLSAFGGATMWDYTIPILEIKLKILPVLGFLGGVIFSCSNYFHVILHGGVGKNGSTIAGTSVLSPGLHIGLIIILAIMIYKKSATDVFEKHPCLYILMFGCVFAKVSQKLVVAHMTKSELYLQDTVFLGPGLLFLDQYFNNFIDEYVVLWMAMVISSFDMVIYFSALCLQISRHLHLNIFKTACHQAPEQVQVLSSKSHQNNMD</sequence>
<gene>
    <name evidence="8" type="primary">CHPT1</name>
    <name type="synonym">CPT1</name>
    <name type="ORF">MSTP022</name>
</gene>
<feature type="initiator methionine" description="Removed" evidence="9">
    <location>
        <position position="1"/>
    </location>
</feature>
<feature type="chain" id="PRO_0000289252" description="Cholinephosphotransferase 1">
    <location>
        <begin position="2"/>
        <end position="406"/>
    </location>
</feature>
<feature type="topological domain" description="Cytoplasmic" evidence="6">
    <location>
        <begin position="2"/>
        <end position="62"/>
    </location>
</feature>
<feature type="transmembrane region" description="Helical; Name=1" evidence="1">
    <location>
        <begin position="63"/>
        <end position="83"/>
    </location>
</feature>
<feature type="topological domain" description="Lumenal" evidence="6">
    <location>
        <begin position="84"/>
        <end position="93"/>
    </location>
</feature>
<feature type="transmembrane region" description="Helical; Name=2" evidence="1">
    <location>
        <begin position="94"/>
        <end position="118"/>
    </location>
</feature>
<feature type="topological domain" description="Cytoplasmic" evidence="6">
    <location>
        <begin position="119"/>
        <end position="125"/>
    </location>
</feature>
<feature type="transmembrane region" description="Helical; Name=3" evidence="1">
    <location>
        <begin position="126"/>
        <end position="150"/>
    </location>
</feature>
<feature type="topological domain" description="Lumenal" evidence="6">
    <location>
        <begin position="151"/>
        <end position="160"/>
    </location>
</feature>
<feature type="transmembrane region" description="Helical; Name=4" evidence="1">
    <location>
        <begin position="161"/>
        <end position="179"/>
    </location>
</feature>
<feature type="topological domain" description="Cytoplasmic" evidence="6">
    <location>
        <begin position="180"/>
        <end position="190"/>
    </location>
</feature>
<feature type="transmembrane region" description="Helical; Name=5" evidence="1">
    <location>
        <begin position="191"/>
        <end position="207"/>
    </location>
</feature>
<feature type="topological domain" description="Lumenal" evidence="6">
    <location>
        <begin position="208"/>
        <end position="222"/>
    </location>
</feature>
<feature type="transmembrane region" description="Helical; Name=6" evidence="1">
    <location>
        <begin position="223"/>
        <end position="248"/>
    </location>
</feature>
<feature type="topological domain" description="Cytoplasmic" evidence="6">
    <location>
        <begin position="249"/>
        <end position="265"/>
    </location>
</feature>
<feature type="transmembrane region" description="Helical; Name=7" evidence="1">
    <location>
        <begin position="266"/>
        <end position="281"/>
    </location>
</feature>
<feature type="topological domain" description="Lumenal" evidence="6">
    <location>
        <begin position="282"/>
        <end position="293"/>
    </location>
</feature>
<feature type="transmembrane region" description="Helical; Name=8" evidence="1">
    <location>
        <begin position="294"/>
        <end position="316"/>
    </location>
</feature>
<feature type="topological domain" description="Cytoplasmic" evidence="6">
    <location>
        <begin position="317"/>
        <end position="329"/>
    </location>
</feature>
<feature type="transmembrane region" description="Helical; Name=9" evidence="1">
    <location>
        <begin position="330"/>
        <end position="339"/>
    </location>
</feature>
<feature type="topological domain" description="Lumenal" evidence="6">
    <location>
        <begin position="340"/>
        <end position="346"/>
    </location>
</feature>
<feature type="transmembrane region" description="Helical; Name=10" evidence="1">
    <location>
        <begin position="347"/>
        <end position="376"/>
    </location>
</feature>
<feature type="topological domain" description="Cytoplasmic" evidence="6">
    <location>
        <begin position="377"/>
        <end position="406"/>
    </location>
</feature>
<feature type="active site" description="Proton acceptor" evidence="1">
    <location>
        <position position="133"/>
    </location>
</feature>
<feature type="binding site" evidence="1">
    <location>
        <position position="64"/>
    </location>
    <ligand>
        <name>CDP-choline</name>
        <dbReference type="ChEBI" id="CHEBI:58779"/>
    </ligand>
</feature>
<feature type="binding site" evidence="1">
    <location>
        <position position="111"/>
    </location>
    <ligand>
        <name>Mg(2+)</name>
        <dbReference type="ChEBI" id="CHEBI:18420"/>
        <label>1</label>
    </ligand>
</feature>
<feature type="binding site" evidence="1">
    <location>
        <position position="111"/>
    </location>
    <ligand>
        <name>Mg(2+)</name>
        <dbReference type="ChEBI" id="CHEBI:18420"/>
        <label>2</label>
    </ligand>
</feature>
<feature type="binding site" evidence="1">
    <location>
        <position position="114"/>
    </location>
    <ligand>
        <name>Mg(2+)</name>
        <dbReference type="ChEBI" id="CHEBI:18420"/>
        <label>1</label>
    </ligand>
</feature>
<feature type="binding site" evidence="1">
    <location>
        <position position="119"/>
    </location>
    <ligand>
        <name>CDP-choline</name>
        <dbReference type="ChEBI" id="CHEBI:58779"/>
    </ligand>
</feature>
<feature type="binding site" evidence="1">
    <location>
        <position position="132"/>
    </location>
    <ligand>
        <name>Mg(2+)</name>
        <dbReference type="ChEBI" id="CHEBI:18420"/>
        <label>1</label>
    </ligand>
</feature>
<feature type="binding site" evidence="1">
    <location>
        <position position="132"/>
    </location>
    <ligand>
        <name>Mg(2+)</name>
        <dbReference type="ChEBI" id="CHEBI:18420"/>
        <label>2</label>
    </ligand>
</feature>
<feature type="binding site" evidence="1">
    <location>
        <position position="136"/>
    </location>
    <ligand>
        <name>Mg(2+)</name>
        <dbReference type="ChEBI" id="CHEBI:18420"/>
        <label>2</label>
    </ligand>
</feature>
<feature type="site" description="Increases basicity of active site His" evidence="1">
    <location>
        <position position="129"/>
    </location>
</feature>
<feature type="modified residue" description="N-acetylalanine" evidence="9">
    <location>
        <position position="2"/>
    </location>
</feature>
<feature type="splice variant" id="VSP_025989" description="In isoform 2." evidence="5">
    <original>IP</original>
    <variation>FS</variation>
    <location>
        <begin position="217"/>
        <end position="218"/>
    </location>
</feature>
<feature type="splice variant" id="VSP_025990" description="In isoform 2." evidence="5">
    <location>
        <begin position="219"/>
        <end position="406"/>
    </location>
</feature>
<feature type="sequence variant" id="VAR_032612" description="In dbSNP:rs3205421." evidence="2">
    <original>F</original>
    <variation>S</variation>
    <location>
        <position position="162"/>
    </location>
</feature>
<feature type="sequence variant" id="VAR_032613" description="In MCF-12A cell line." evidence="4">
    <original>Y</original>
    <variation>S</variation>
    <location>
        <position position="323"/>
    </location>
</feature>
<feature type="sequence conflict" description="In Ref. 5; AAD44019." evidence="6" ref="5">
    <original>P</original>
    <variation>L</variation>
    <location>
        <position position="86"/>
    </location>
</feature>
<feature type="sequence conflict" description="In Ref. 5; AAD44019." evidence="6" ref="5">
    <original>S</original>
    <variation>P</variation>
    <location>
        <position position="109"/>
    </location>
</feature>
<feature type="sequence conflict" description="In Ref. 5; AAD44019." evidence="6" ref="5">
    <original>L</original>
    <variation>P</variation>
    <location>
        <position position="269"/>
    </location>
</feature>
<feature type="sequence conflict" description="In Ref. 5; AAD44019." evidence="6" ref="5">
    <original>D</original>
    <variation>G</variation>
    <location>
        <position position="346"/>
    </location>
</feature>
<name>CHPT1_HUMAN</name>
<comment type="function">
    <text evidence="2">Catalyzes the final step of de novo phosphatidylcholine (PC) synthesis, i.e. the transfer of choline phosphate from CDP-choline to the free hydroxyl of a diacylglycerol (DAG), producing a PC. It thereby plays a central role in the formation and maintenance of vesicular membranes.</text>
</comment>
<comment type="catalytic activity">
    <reaction evidence="2">
        <text>CDP-choline + a 1,2-diacyl-sn-glycerol = a 1,2-diacyl-sn-glycero-3-phosphocholine + CMP + H(+)</text>
        <dbReference type="Rhea" id="RHEA:32939"/>
        <dbReference type="ChEBI" id="CHEBI:15378"/>
        <dbReference type="ChEBI" id="CHEBI:17815"/>
        <dbReference type="ChEBI" id="CHEBI:57643"/>
        <dbReference type="ChEBI" id="CHEBI:58779"/>
        <dbReference type="ChEBI" id="CHEBI:60377"/>
        <dbReference type="EC" id="2.7.8.2"/>
    </reaction>
    <physiologicalReaction direction="left-to-right" evidence="7">
        <dbReference type="Rhea" id="RHEA:32940"/>
    </physiologicalReaction>
</comment>
<comment type="catalytic activity">
    <reaction evidence="2">
        <text>1-octadecanoyl-2-(5Z,8Z,11Z,14Z-eicosatetraenoyl)-sn-glycerol + CDP-choline = 1-octadecanoyl-2-(5Z,8Z,11Z,14Z-eicosatetraenoyl)-sn-glycero-3-phosphocholine + CMP + H(+)</text>
        <dbReference type="Rhea" id="RHEA:54344"/>
        <dbReference type="ChEBI" id="CHEBI:15378"/>
        <dbReference type="ChEBI" id="CHEBI:58779"/>
        <dbReference type="ChEBI" id="CHEBI:60377"/>
        <dbReference type="ChEBI" id="CHEBI:74965"/>
        <dbReference type="ChEBI" id="CHEBI:75728"/>
    </reaction>
    <physiologicalReaction direction="left-to-right" evidence="7">
        <dbReference type="Rhea" id="RHEA:54345"/>
    </physiologicalReaction>
</comment>
<comment type="catalytic activity">
    <reaction evidence="2">
        <text>1-hexadecanoyl-2-(9Z-octadecenoyl)-sn-glycerol + CDP-choline = 1-hexadecanoyl-2-(9Z-octadecenoyl)-sn-glycero-3-phosphocholine + CMP + H(+)</text>
        <dbReference type="Rhea" id="RHEA:54244"/>
        <dbReference type="ChEBI" id="CHEBI:15378"/>
        <dbReference type="ChEBI" id="CHEBI:58779"/>
        <dbReference type="ChEBI" id="CHEBI:60377"/>
        <dbReference type="ChEBI" id="CHEBI:73001"/>
        <dbReference type="ChEBI" id="CHEBI:75466"/>
    </reaction>
    <physiologicalReaction direction="left-to-right" evidence="7">
        <dbReference type="Rhea" id="RHEA:54245"/>
    </physiologicalReaction>
</comment>
<comment type="catalytic activity">
    <reaction evidence="2">
        <text>1-hexadecanoyl-2-(4Z,7Z,10Z,13Z,16Z,19Z-docosahexaenoyl)-sn-glycerol + CDP-choline = 1-hexadecanoyl-2-(4Z,7Z,10Z,13Z,16Z,19Z-docosahexaenoyl)-sn-glycero-3-phosphocholine + CMP + H(+)</text>
        <dbReference type="Rhea" id="RHEA:54332"/>
        <dbReference type="ChEBI" id="CHEBI:15378"/>
        <dbReference type="ChEBI" id="CHEBI:58779"/>
        <dbReference type="ChEBI" id="CHEBI:60377"/>
        <dbReference type="ChEBI" id="CHEBI:74963"/>
        <dbReference type="ChEBI" id="CHEBI:82949"/>
    </reaction>
    <physiologicalReaction direction="left-to-right" evidence="7">
        <dbReference type="Rhea" id="RHEA:54333"/>
    </physiologicalReaction>
</comment>
<comment type="catalytic activity">
    <reaction evidence="1">
        <text>1,2-dioctanoyl-sn-glycerol + CDP-choline = 1,2-dioctanoyl-sn-glycero-3-phosphocholine + CMP + H(+)</text>
        <dbReference type="Rhea" id="RHEA:54232"/>
        <dbReference type="ChEBI" id="CHEBI:15378"/>
        <dbReference type="ChEBI" id="CHEBI:58779"/>
        <dbReference type="ChEBI" id="CHEBI:60377"/>
        <dbReference type="ChEBI" id="CHEBI:76979"/>
        <dbReference type="ChEBI" id="CHEBI:78228"/>
    </reaction>
    <physiologicalReaction direction="left-to-right" evidence="1">
        <dbReference type="Rhea" id="RHEA:54233"/>
    </physiologicalReaction>
</comment>
<comment type="cofactor">
    <cofactor evidence="2">
        <name>Mg(2+)</name>
        <dbReference type="ChEBI" id="CHEBI:18420"/>
    </cofactor>
    <cofactor evidence="2">
        <name>Mn(2+)</name>
        <dbReference type="ChEBI" id="CHEBI:29035"/>
    </cofactor>
</comment>
<comment type="pathway">
    <text evidence="2">Phospholipid metabolism; phosphatidylcholine biosynthesis; phosphatidylcholine from phosphocholine: step 2/2.</text>
</comment>
<comment type="interaction">
    <interactant intactId="EBI-11337856">
        <id>Q8WUD6</id>
    </interactant>
    <interactant intactId="EBI-12947623">
        <id>Q96MV1</id>
        <label>TLCD4</label>
    </interactant>
    <organismsDiffer>false</organismsDiffer>
    <experiments>3</experiments>
</comment>
<comment type="subcellular location">
    <subcellularLocation>
        <location evidence="3">Golgi apparatus membrane</location>
        <topology evidence="3">Multi-pass membrane protein</topology>
    </subcellularLocation>
</comment>
<comment type="alternative products">
    <event type="alternative splicing"/>
    <isoform>
        <id>Q8WUD6-1</id>
        <name>1</name>
        <name>Alpha</name>
        <sequence type="displayed"/>
    </isoform>
    <isoform>
        <id>Q8WUD6-2</id>
        <name>2</name>
        <name>Beta</name>
        <sequence type="described" ref="VSP_025989 VSP_025990"/>
    </isoform>
</comment>
<comment type="tissue specificity">
    <text evidence="2 4">Highly expressed in testis, colon, small intestine, heart, prostate and spleen. Also detected in kidney, skeletal muscle, pancreas, leukocytes, ovary and thymus. Weakly expressed in the brain, placenta and lung. Overexpressed in cancerous breast epithelial cell lines.</text>
</comment>
<comment type="similarity">
    <text evidence="6">Belongs to the CDP-alcohol phosphatidyltransferase class-I family.</text>
</comment>
<comment type="sequence caution" evidence="6">
    <conflict type="frameshift">
        <sequence resource="EMBL-CDS" id="AAD44019"/>
    </conflict>
</comment>
<comment type="sequence caution" evidence="6">
    <conflict type="erroneous initiation">
        <sequence resource="EMBL-CDS" id="AAL39005"/>
    </conflict>
    <text>Truncated N-terminus.</text>
</comment>
<proteinExistence type="evidence at protein level"/>
<organism>
    <name type="scientific">Homo sapiens</name>
    <name type="common">Human</name>
    <dbReference type="NCBI Taxonomy" id="9606"/>
    <lineage>
        <taxon>Eukaryota</taxon>
        <taxon>Metazoa</taxon>
        <taxon>Chordata</taxon>
        <taxon>Craniata</taxon>
        <taxon>Vertebrata</taxon>
        <taxon>Euteleostomi</taxon>
        <taxon>Mammalia</taxon>
        <taxon>Eutheria</taxon>
        <taxon>Euarchontoglires</taxon>
        <taxon>Primates</taxon>
        <taxon>Haplorrhini</taxon>
        <taxon>Catarrhini</taxon>
        <taxon>Hominidae</taxon>
        <taxon>Homo</taxon>
    </lineage>
</organism>
<accession>Q8WUD6</accession>
<accession>B3KQM2</accession>
<accession>Q7Z7H0</accession>
<accession>Q7Z7H1</accession>
<accession>Q7Z7H2</accession>
<accession>Q8IWQ4</accession>
<accession>Q8IWQ5</accession>
<accession>Q8WYI4</accession>
<accession>Q9NRQ6</accession>
<accession>Q9NRQ7</accession>
<accession>Q9Y6M6</accession>
<reference key="1">
    <citation type="journal article" date="2000" name="J. Biol. Chem.">
        <title>Cloning, genomic organization, and characterization of a human cholinephosphotransferase.</title>
        <authorList>
            <person name="Henneberry A.L."/>
            <person name="Wistow G."/>
            <person name="McMaster C.R."/>
        </authorList>
    </citation>
    <scope>NUCLEOTIDE SEQUENCE [MRNA] (ISOFORMS 1 AND 2)</scope>
    <scope>ENZYME ACTIVITY</scope>
    <scope>COFACTOR</scope>
    <scope>TISSUE SPECIFICITY</scope>
    <scope>VARIANT SER-162</scope>
    <scope>CATALYTIC ACTIVITY</scope>
    <scope>FUNCTION</scope>
    <source>
        <tissue>Brain</tissue>
    </source>
</reference>
<reference key="2">
    <citation type="journal article" date="2005" name="DNA Res.">
        <title>Signal sequence and keyword trap in silico for selection of full-length human cDNAs encoding secretion or membrane proteins from oligo-capped cDNA libraries.</title>
        <authorList>
            <person name="Otsuki T."/>
            <person name="Ota T."/>
            <person name="Nishikawa T."/>
            <person name="Hayashi K."/>
            <person name="Suzuki Y."/>
            <person name="Yamamoto J."/>
            <person name="Wakamatsu A."/>
            <person name="Kimura K."/>
            <person name="Sakamoto K."/>
            <person name="Hatano N."/>
            <person name="Kawai Y."/>
            <person name="Ishii S."/>
            <person name="Saito K."/>
            <person name="Kojima S."/>
            <person name="Sugiyama T."/>
            <person name="Ono T."/>
            <person name="Okano K."/>
            <person name="Yoshikawa Y."/>
            <person name="Aotsuka S."/>
            <person name="Sasaki N."/>
            <person name="Hattori A."/>
            <person name="Okumura K."/>
            <person name="Nagai K."/>
            <person name="Sugano S."/>
            <person name="Isogai T."/>
        </authorList>
    </citation>
    <scope>NUCLEOTIDE SEQUENCE [LARGE SCALE MRNA] (ISOFORM 1)</scope>
    <source>
        <tissue>Placenta</tissue>
    </source>
</reference>
<reference key="3">
    <citation type="submission" date="2005-07" db="EMBL/GenBank/DDBJ databases">
        <authorList>
            <person name="Mural R.J."/>
            <person name="Istrail S."/>
            <person name="Sutton G.G."/>
            <person name="Florea L."/>
            <person name="Halpern A.L."/>
            <person name="Mobarry C.M."/>
            <person name="Lippert R."/>
            <person name="Walenz B."/>
            <person name="Shatkay H."/>
            <person name="Dew I."/>
            <person name="Miller J.R."/>
            <person name="Flanigan M.J."/>
            <person name="Edwards N.J."/>
            <person name="Bolanos R."/>
            <person name="Fasulo D."/>
            <person name="Halldorsson B.V."/>
            <person name="Hannenhalli S."/>
            <person name="Turner R."/>
            <person name="Yooseph S."/>
            <person name="Lu F."/>
            <person name="Nusskern D.R."/>
            <person name="Shue B.C."/>
            <person name="Zheng X.H."/>
            <person name="Zhong F."/>
            <person name="Delcher A.L."/>
            <person name="Huson D.H."/>
            <person name="Kravitz S.A."/>
            <person name="Mouchard L."/>
            <person name="Reinert K."/>
            <person name="Remington K.A."/>
            <person name="Clark A.G."/>
            <person name="Waterman M.S."/>
            <person name="Eichler E.E."/>
            <person name="Adams M.D."/>
            <person name="Hunkapiller M.W."/>
            <person name="Myers E.W."/>
            <person name="Venter J.C."/>
        </authorList>
    </citation>
    <scope>NUCLEOTIDE SEQUENCE [LARGE SCALE GENOMIC DNA]</scope>
</reference>
<reference key="4">
    <citation type="journal article" date="2004" name="Genome Res.">
        <title>The status, quality, and expansion of the NIH full-length cDNA project: the Mammalian Gene Collection (MGC).</title>
        <authorList>
            <consortium name="The MGC Project Team"/>
        </authorList>
    </citation>
    <scope>NUCLEOTIDE SEQUENCE [LARGE SCALE MRNA] (ISOFORM 1)</scope>
    <source>
        <tissue>Testis</tissue>
        <tissue>Uterus</tissue>
    </source>
</reference>
<reference key="5">
    <citation type="submission" date="1998-02" db="EMBL/GenBank/DDBJ databases">
        <title>Human AAPT1-like gene.</title>
        <authorList>
            <person name="Zhang Q."/>
            <person name="Mao M."/>
            <person name="Fu G."/>
            <person name="Huang Q."/>
            <person name="Zhou J."/>
            <person name="Yu Y."/>
            <person name="Xu S."/>
            <person name="Shen Y."/>
            <person name="Huang Q."/>
            <person name="Wang Y."/>
            <person name="Chen Z."/>
        </authorList>
    </citation>
    <scope>NUCLEOTIDE SEQUENCE [MRNA] OF 70-406</scope>
</reference>
<reference key="6">
    <citation type="submission" date="1998-12" db="EMBL/GenBank/DDBJ databases">
        <authorList>
            <person name="Xu Y.Y."/>
            <person name="Sun L.Z."/>
            <person name="Wu Q.Y."/>
            <person name="Liu Y.Q."/>
            <person name="Liu B."/>
            <person name="Zhao B."/>
            <person name="Wang X.Y."/>
            <person name="Song L."/>
            <person name="Ye J."/>
            <person name="Sheng H."/>
            <person name="Gao Y."/>
            <person name="Zhang C.L."/>
            <person name="Zhang J."/>
            <person name="Wei Y.J."/>
            <person name="Sun Y.H."/>
            <person name="Jiang Y.X."/>
            <person name="Zhao X.W."/>
            <person name="Liu S."/>
            <person name="Liu L.S."/>
            <person name="Ding J.F."/>
            <person name="Gao R.L."/>
            <person name="Qiang B.Q."/>
            <person name="Yuan J.G."/>
            <person name="Liew C.C."/>
            <person name="Zhao M.S."/>
            <person name="Hui R.T."/>
        </authorList>
    </citation>
    <scope>NUCLEOTIDE SEQUENCE [LARGE SCALE MRNA] OF 115-406</scope>
    <source>
        <tissue>Heart</tissue>
    </source>
</reference>
<reference key="7">
    <citation type="journal article" date="2005" name="J. Biochem. Mol. Toxicol.">
        <title>Inhibition of cholinephosphotransferase activity in lung injury induced by 2-chloroethyl ethyl sulfide, a mustard analog.</title>
        <authorList>
            <person name="Sinha Roy S."/>
            <person name="Mukherjee S."/>
            <person name="Kabir S."/>
            <person name="Rajaratnam V."/>
            <person name="Smith M."/>
            <person name="Das S.K."/>
        </authorList>
    </citation>
    <scope>NUCLEOTIDE SEQUENCE [MRNA] OF 174-406</scope>
</reference>
<reference key="8">
    <citation type="journal article" date="2002" name="Biochem. Biophys. Res. Commun.">
        <title>Differential expression of cholinephosphotransferase in normal and cancerous human mammary epithelial cells.</title>
        <authorList>
            <person name="Ghosh A."/>
            <person name="Akech J."/>
            <person name="Mukherjee S."/>
            <person name="Das S.K."/>
        </authorList>
    </citation>
    <scope>NUCLEOTIDE SEQUENCE [MRNA] OF 235-371</scope>
    <scope>TISSUE SPECIFICITY</scope>
    <scope>VARIANT SER-323</scope>
</reference>
<reference key="9">
    <citation type="journal article" date="2002" name="Mol. Biol. Cell">
        <title>The major sites of cellular phospholipid synthesis and molecular determinants of fatty acid and lipid head group specificity.</title>
        <authorList>
            <person name="Henneberry A.L."/>
            <person name="Wright M.M."/>
            <person name="McMaster C.R."/>
        </authorList>
    </citation>
    <scope>SUBCELLULAR LOCATION</scope>
</reference>
<reference key="10">
    <citation type="journal article" date="2012" name="Proc. Natl. Acad. Sci. U.S.A.">
        <title>N-terminal acetylome analyses and functional insights of the N-terminal acetyltransferase NatB.</title>
        <authorList>
            <person name="Van Damme P."/>
            <person name="Lasa M."/>
            <person name="Polevoda B."/>
            <person name="Gazquez C."/>
            <person name="Elosegui-Artola A."/>
            <person name="Kim D.S."/>
            <person name="De Juan-Pardo E."/>
            <person name="Demeyer K."/>
            <person name="Hole K."/>
            <person name="Larrea E."/>
            <person name="Timmerman E."/>
            <person name="Prieto J."/>
            <person name="Arnesen T."/>
            <person name="Sherman F."/>
            <person name="Gevaert K."/>
            <person name="Aldabe R."/>
        </authorList>
    </citation>
    <scope>ACETYLATION [LARGE SCALE ANALYSIS] AT ALA-2</scope>
    <scope>CLEAVAGE OF INITIATOR METHIONINE [LARGE SCALE ANALYSIS]</scope>
    <scope>IDENTIFICATION BY MASS SPECTROMETRY [LARGE SCALE ANALYSIS]</scope>
</reference>
<protein>
    <recommendedName>
        <fullName evidence="6">Cholinephosphotransferase 1</fullName>
        <shortName evidence="5">hCPT1</shortName>
        <ecNumber evidence="2">2.7.8.2</ecNumber>
    </recommendedName>
    <alternativeName>
        <fullName>AAPT1-like protein</fullName>
    </alternativeName>
    <alternativeName>
        <fullName>Diacylglycerol cholinephosphotransferase 1</fullName>
    </alternativeName>
</protein>
<keyword id="KW-0007">Acetylation</keyword>
<keyword id="KW-0025">Alternative splicing</keyword>
<keyword id="KW-0333">Golgi apparatus</keyword>
<keyword id="KW-0444">Lipid biosynthesis</keyword>
<keyword id="KW-0443">Lipid metabolism</keyword>
<keyword id="KW-0460">Magnesium</keyword>
<keyword id="KW-0464">Manganese</keyword>
<keyword id="KW-0472">Membrane</keyword>
<keyword id="KW-0479">Metal-binding</keyword>
<keyword id="KW-0594">Phospholipid biosynthesis</keyword>
<keyword id="KW-1208">Phospholipid metabolism</keyword>
<keyword id="KW-1267">Proteomics identification</keyword>
<keyword id="KW-1185">Reference proteome</keyword>
<keyword id="KW-0808">Transferase</keyword>
<keyword id="KW-0812">Transmembrane</keyword>
<keyword id="KW-1133">Transmembrane helix</keyword>